<reference key="1">
    <citation type="journal article" date="2005" name="Science">
        <title>The transcriptional landscape of the mammalian genome.</title>
        <authorList>
            <person name="Carninci P."/>
            <person name="Kasukawa T."/>
            <person name="Katayama S."/>
            <person name="Gough J."/>
            <person name="Frith M.C."/>
            <person name="Maeda N."/>
            <person name="Oyama R."/>
            <person name="Ravasi T."/>
            <person name="Lenhard B."/>
            <person name="Wells C."/>
            <person name="Kodzius R."/>
            <person name="Shimokawa K."/>
            <person name="Bajic V.B."/>
            <person name="Brenner S.E."/>
            <person name="Batalov S."/>
            <person name="Forrest A.R."/>
            <person name="Zavolan M."/>
            <person name="Davis M.J."/>
            <person name="Wilming L.G."/>
            <person name="Aidinis V."/>
            <person name="Allen J.E."/>
            <person name="Ambesi-Impiombato A."/>
            <person name="Apweiler R."/>
            <person name="Aturaliya R.N."/>
            <person name="Bailey T.L."/>
            <person name="Bansal M."/>
            <person name="Baxter L."/>
            <person name="Beisel K.W."/>
            <person name="Bersano T."/>
            <person name="Bono H."/>
            <person name="Chalk A.M."/>
            <person name="Chiu K.P."/>
            <person name="Choudhary V."/>
            <person name="Christoffels A."/>
            <person name="Clutterbuck D.R."/>
            <person name="Crowe M.L."/>
            <person name="Dalla E."/>
            <person name="Dalrymple B.P."/>
            <person name="de Bono B."/>
            <person name="Della Gatta G."/>
            <person name="di Bernardo D."/>
            <person name="Down T."/>
            <person name="Engstrom P."/>
            <person name="Fagiolini M."/>
            <person name="Faulkner G."/>
            <person name="Fletcher C.F."/>
            <person name="Fukushima T."/>
            <person name="Furuno M."/>
            <person name="Futaki S."/>
            <person name="Gariboldi M."/>
            <person name="Georgii-Hemming P."/>
            <person name="Gingeras T.R."/>
            <person name="Gojobori T."/>
            <person name="Green R.E."/>
            <person name="Gustincich S."/>
            <person name="Harbers M."/>
            <person name="Hayashi Y."/>
            <person name="Hensch T.K."/>
            <person name="Hirokawa N."/>
            <person name="Hill D."/>
            <person name="Huminiecki L."/>
            <person name="Iacono M."/>
            <person name="Ikeo K."/>
            <person name="Iwama A."/>
            <person name="Ishikawa T."/>
            <person name="Jakt M."/>
            <person name="Kanapin A."/>
            <person name="Katoh M."/>
            <person name="Kawasawa Y."/>
            <person name="Kelso J."/>
            <person name="Kitamura H."/>
            <person name="Kitano H."/>
            <person name="Kollias G."/>
            <person name="Krishnan S.P."/>
            <person name="Kruger A."/>
            <person name="Kummerfeld S.K."/>
            <person name="Kurochkin I.V."/>
            <person name="Lareau L.F."/>
            <person name="Lazarevic D."/>
            <person name="Lipovich L."/>
            <person name="Liu J."/>
            <person name="Liuni S."/>
            <person name="McWilliam S."/>
            <person name="Madan Babu M."/>
            <person name="Madera M."/>
            <person name="Marchionni L."/>
            <person name="Matsuda H."/>
            <person name="Matsuzawa S."/>
            <person name="Miki H."/>
            <person name="Mignone F."/>
            <person name="Miyake S."/>
            <person name="Morris K."/>
            <person name="Mottagui-Tabar S."/>
            <person name="Mulder N."/>
            <person name="Nakano N."/>
            <person name="Nakauchi H."/>
            <person name="Ng P."/>
            <person name="Nilsson R."/>
            <person name="Nishiguchi S."/>
            <person name="Nishikawa S."/>
            <person name="Nori F."/>
            <person name="Ohara O."/>
            <person name="Okazaki Y."/>
            <person name="Orlando V."/>
            <person name="Pang K.C."/>
            <person name="Pavan W.J."/>
            <person name="Pavesi G."/>
            <person name="Pesole G."/>
            <person name="Petrovsky N."/>
            <person name="Piazza S."/>
            <person name="Reed J."/>
            <person name="Reid J.F."/>
            <person name="Ring B.Z."/>
            <person name="Ringwald M."/>
            <person name="Rost B."/>
            <person name="Ruan Y."/>
            <person name="Salzberg S.L."/>
            <person name="Sandelin A."/>
            <person name="Schneider C."/>
            <person name="Schoenbach C."/>
            <person name="Sekiguchi K."/>
            <person name="Semple C.A."/>
            <person name="Seno S."/>
            <person name="Sessa L."/>
            <person name="Sheng Y."/>
            <person name="Shibata Y."/>
            <person name="Shimada H."/>
            <person name="Shimada K."/>
            <person name="Silva D."/>
            <person name="Sinclair B."/>
            <person name="Sperling S."/>
            <person name="Stupka E."/>
            <person name="Sugiura K."/>
            <person name="Sultana R."/>
            <person name="Takenaka Y."/>
            <person name="Taki K."/>
            <person name="Tammoja K."/>
            <person name="Tan S.L."/>
            <person name="Tang S."/>
            <person name="Taylor M.S."/>
            <person name="Tegner J."/>
            <person name="Teichmann S.A."/>
            <person name="Ueda H.R."/>
            <person name="van Nimwegen E."/>
            <person name="Verardo R."/>
            <person name="Wei C.L."/>
            <person name="Yagi K."/>
            <person name="Yamanishi H."/>
            <person name="Zabarovsky E."/>
            <person name="Zhu S."/>
            <person name="Zimmer A."/>
            <person name="Hide W."/>
            <person name="Bult C."/>
            <person name="Grimmond S.M."/>
            <person name="Teasdale R.D."/>
            <person name="Liu E.T."/>
            <person name="Brusic V."/>
            <person name="Quackenbush J."/>
            <person name="Wahlestedt C."/>
            <person name="Mattick J.S."/>
            <person name="Hume D.A."/>
            <person name="Kai C."/>
            <person name="Sasaki D."/>
            <person name="Tomaru Y."/>
            <person name="Fukuda S."/>
            <person name="Kanamori-Katayama M."/>
            <person name="Suzuki M."/>
            <person name="Aoki J."/>
            <person name="Arakawa T."/>
            <person name="Iida J."/>
            <person name="Imamura K."/>
            <person name="Itoh M."/>
            <person name="Kato T."/>
            <person name="Kawaji H."/>
            <person name="Kawagashira N."/>
            <person name="Kawashima T."/>
            <person name="Kojima M."/>
            <person name="Kondo S."/>
            <person name="Konno H."/>
            <person name="Nakano K."/>
            <person name="Ninomiya N."/>
            <person name="Nishio T."/>
            <person name="Okada M."/>
            <person name="Plessy C."/>
            <person name="Shibata K."/>
            <person name="Shiraki T."/>
            <person name="Suzuki S."/>
            <person name="Tagami M."/>
            <person name="Waki K."/>
            <person name="Watahiki A."/>
            <person name="Okamura-Oho Y."/>
            <person name="Suzuki H."/>
            <person name="Kawai J."/>
            <person name="Hayashizaki Y."/>
        </authorList>
    </citation>
    <scope>NUCLEOTIDE SEQUENCE [LARGE SCALE MRNA]</scope>
    <source>
        <strain>C57BL/6J</strain>
        <tissue>Brain</tissue>
        <tissue>Testis</tissue>
    </source>
</reference>
<reference key="2">
    <citation type="journal article" date="2009" name="PLoS Biol.">
        <title>Lineage-specific biology revealed by a finished genome assembly of the mouse.</title>
        <authorList>
            <person name="Church D.M."/>
            <person name="Goodstadt L."/>
            <person name="Hillier L.W."/>
            <person name="Zody M.C."/>
            <person name="Goldstein S."/>
            <person name="She X."/>
            <person name="Bult C.J."/>
            <person name="Agarwala R."/>
            <person name="Cherry J.L."/>
            <person name="DiCuccio M."/>
            <person name="Hlavina W."/>
            <person name="Kapustin Y."/>
            <person name="Meric P."/>
            <person name="Maglott D."/>
            <person name="Birtle Z."/>
            <person name="Marques A.C."/>
            <person name="Graves T."/>
            <person name="Zhou S."/>
            <person name="Teague B."/>
            <person name="Potamousis K."/>
            <person name="Churas C."/>
            <person name="Place M."/>
            <person name="Herschleb J."/>
            <person name="Runnheim R."/>
            <person name="Forrest D."/>
            <person name="Amos-Landgraf J."/>
            <person name="Schwartz D.C."/>
            <person name="Cheng Z."/>
            <person name="Lindblad-Toh K."/>
            <person name="Eichler E.E."/>
            <person name="Ponting C.P."/>
        </authorList>
    </citation>
    <scope>NUCLEOTIDE SEQUENCE [LARGE SCALE GENOMIC DNA]</scope>
    <source>
        <strain>C57BL/6J</strain>
    </source>
</reference>
<reference key="3">
    <citation type="journal article" date="2004" name="Genome Res.">
        <title>The status, quality, and expansion of the NIH full-length cDNA project: the Mammalian Gene Collection (MGC).</title>
        <authorList>
            <consortium name="The MGC Project Team"/>
        </authorList>
    </citation>
    <scope>NUCLEOTIDE SEQUENCE [LARGE SCALE MRNA]</scope>
    <source>
        <strain>C57BL/6J</strain>
        <tissue>Thymus</tissue>
    </source>
</reference>
<accession>Q8R043</accession>
<accession>Q3V2N7</accession>
<dbReference type="EMBL" id="AK131593">
    <property type="protein sequence ID" value="BAE20706.1"/>
    <property type="molecule type" value="mRNA"/>
</dbReference>
<dbReference type="EMBL" id="AK131681">
    <property type="protein sequence ID" value="BAE20760.1"/>
    <property type="molecule type" value="mRNA"/>
</dbReference>
<dbReference type="EMBL" id="AC127341">
    <property type="status" value="NOT_ANNOTATED_CDS"/>
    <property type="molecule type" value="Genomic_DNA"/>
</dbReference>
<dbReference type="EMBL" id="BC028464">
    <property type="protein sequence ID" value="AAH28464.2"/>
    <property type="molecule type" value="mRNA"/>
</dbReference>
<dbReference type="CCDS" id="CCDS37521.1"/>
<dbReference type="RefSeq" id="NP_001002895.2">
    <property type="nucleotide sequence ID" value="NM_001002895.3"/>
</dbReference>
<dbReference type="RefSeq" id="NP_001400643.1">
    <property type="nucleotide sequence ID" value="NM_001413714.1"/>
</dbReference>
<dbReference type="RefSeq" id="NP_001400644.1">
    <property type="nucleotide sequence ID" value="NM_001413715.1"/>
</dbReference>
<dbReference type="RefSeq" id="NP_001400646.1">
    <property type="nucleotide sequence ID" value="NM_001413717.1"/>
</dbReference>
<dbReference type="RefSeq" id="XP_006523476.1">
    <property type="nucleotide sequence ID" value="XM_006523413.3"/>
</dbReference>
<dbReference type="RefSeq" id="XP_011244542.1">
    <property type="nucleotide sequence ID" value="XM_011246240.2"/>
</dbReference>
<dbReference type="SMR" id="Q8R043"/>
<dbReference type="FunCoup" id="Q8R043">
    <property type="interactions" value="12"/>
</dbReference>
<dbReference type="GlyCosmos" id="Q8R043">
    <property type="glycosylation" value="1 site, No reported glycans"/>
</dbReference>
<dbReference type="GlyGen" id="Q8R043">
    <property type="glycosylation" value="1 site"/>
</dbReference>
<dbReference type="PaxDb" id="10090-ENSMUSP00000116199"/>
<dbReference type="ProteomicsDB" id="330858"/>
<dbReference type="Ensembl" id="ENSMUST00000145183.3">
    <property type="protein sequence ID" value="ENSMUSP00000156249.2"/>
    <property type="gene ID" value="ENSMUSG00000062753.15"/>
</dbReference>
<dbReference type="Ensembl" id="ENSMUST00000154473.9">
    <property type="protein sequence ID" value="ENSMUSP00000116199.2"/>
    <property type="gene ID" value="ENSMUSG00000062753.15"/>
</dbReference>
<dbReference type="Ensembl" id="ENSMUST00000232276.2">
    <property type="protein sequence ID" value="ENSMUSP00000156204.2"/>
    <property type="gene ID" value="ENSMUSG00000062753.15"/>
</dbReference>
<dbReference type="GeneID" id="106672"/>
<dbReference type="KEGG" id="mmu:106672"/>
<dbReference type="UCSC" id="uc008bpe.1">
    <property type="organism name" value="mouse"/>
</dbReference>
<dbReference type="AGR" id="MGI:2146839"/>
<dbReference type="CTD" id="221491"/>
<dbReference type="MGI" id="MGI:2146839">
    <property type="gene designation" value="Smim29"/>
</dbReference>
<dbReference type="VEuPathDB" id="HostDB:ENSMUSG00000062753"/>
<dbReference type="eggNOG" id="ENOG502S4I5">
    <property type="taxonomic scope" value="Eukaryota"/>
</dbReference>
<dbReference type="GeneTree" id="ENSGT00410000025882"/>
<dbReference type="HOGENOM" id="CLU_179422_0_0_1"/>
<dbReference type="InParanoid" id="Q8R043"/>
<dbReference type="OMA" id="AVIMYIR"/>
<dbReference type="OrthoDB" id="6381603at2759"/>
<dbReference type="TreeFam" id="TF332764"/>
<dbReference type="BioGRID-ORCS" id="106672">
    <property type="hits" value="5 hits in 77 CRISPR screens"/>
</dbReference>
<dbReference type="ChiTaRS" id="AI413582">
    <property type="organism name" value="mouse"/>
</dbReference>
<dbReference type="PRO" id="PR:Q8R043"/>
<dbReference type="Proteomes" id="UP000000589">
    <property type="component" value="Chromosome 17"/>
</dbReference>
<dbReference type="RNAct" id="Q8R043">
    <property type="molecule type" value="protein"/>
</dbReference>
<dbReference type="Bgee" id="ENSMUSG00000062753">
    <property type="expression patterns" value="Expressed in dentate gyrus of hippocampal formation granule cell and 180 other cell types or tissues"/>
</dbReference>
<dbReference type="ExpressionAtlas" id="Q8R043">
    <property type="expression patterns" value="baseline and differential"/>
</dbReference>
<dbReference type="GO" id="GO:0016020">
    <property type="term" value="C:membrane"/>
    <property type="evidence" value="ECO:0007669"/>
    <property type="project" value="UniProtKB-SubCell"/>
</dbReference>
<dbReference type="InterPro" id="IPR043239">
    <property type="entry name" value="SMIM29"/>
</dbReference>
<dbReference type="PANTHER" id="PTHR47730">
    <property type="entry name" value="SMALL INTEGRAL MEMBRANE PROTEIN 29"/>
    <property type="match status" value="1"/>
</dbReference>
<dbReference type="PANTHER" id="PTHR47730:SF1">
    <property type="entry name" value="SMALL INTEGRAL MEMBRANE PROTEIN 29"/>
    <property type="match status" value="1"/>
</dbReference>
<sequence length="102" mass="11553">MSNTTVPNAPQANSDSMVGYVLGPFFLITLVGVVVAVVMYVQKKKRVDRLRHHLLPMYSYDPAEELQEAEQELLSDVGDPKVVHGWQSSYQHKRMPLLDIKT</sequence>
<keyword id="KW-0325">Glycoprotein</keyword>
<keyword id="KW-0472">Membrane</keyword>
<keyword id="KW-1185">Reference proteome</keyword>
<keyword id="KW-0812">Transmembrane</keyword>
<keyword id="KW-1133">Transmembrane helix</keyword>
<gene>
    <name evidence="2" type="primary">Smim29</name>
</gene>
<protein>
    <recommendedName>
        <fullName evidence="2">Small integral membrane protein 29</fullName>
    </recommendedName>
</protein>
<name>SIM29_MOUSE</name>
<comment type="subcellular location">
    <subcellularLocation>
        <location evidence="1">Membrane</location>
        <topology evidence="1">Single-pass membrane protein</topology>
    </subcellularLocation>
</comment>
<feature type="chain" id="PRO_0000019540" description="Small integral membrane protein 29">
    <location>
        <begin position="1"/>
        <end position="102"/>
    </location>
</feature>
<feature type="transmembrane region" description="Helical" evidence="1">
    <location>
        <begin position="21"/>
        <end position="41"/>
    </location>
</feature>
<feature type="glycosylation site" description="N-linked (GlcNAc...) asparagine" evidence="1">
    <location>
        <position position="3"/>
    </location>
</feature>
<proteinExistence type="inferred from homology"/>
<organism>
    <name type="scientific">Mus musculus</name>
    <name type="common">Mouse</name>
    <dbReference type="NCBI Taxonomy" id="10090"/>
    <lineage>
        <taxon>Eukaryota</taxon>
        <taxon>Metazoa</taxon>
        <taxon>Chordata</taxon>
        <taxon>Craniata</taxon>
        <taxon>Vertebrata</taxon>
        <taxon>Euteleostomi</taxon>
        <taxon>Mammalia</taxon>
        <taxon>Eutheria</taxon>
        <taxon>Euarchontoglires</taxon>
        <taxon>Glires</taxon>
        <taxon>Rodentia</taxon>
        <taxon>Myomorpha</taxon>
        <taxon>Muroidea</taxon>
        <taxon>Muridae</taxon>
        <taxon>Murinae</taxon>
        <taxon>Mus</taxon>
        <taxon>Mus</taxon>
    </lineage>
</organism>
<evidence type="ECO:0000255" key="1"/>
<evidence type="ECO:0000312" key="2">
    <source>
        <dbReference type="MGI" id="MGI:2146839"/>
    </source>
</evidence>